<gene>
    <name type="primary">hisH2</name>
    <name type="ordered locus">MMP1082</name>
</gene>
<protein>
    <recommendedName>
        <fullName>Imidazole glycerol phosphate synthase subunit HisH 2</fullName>
        <ecNumber>4.3.2.10</ecNumber>
    </recommendedName>
    <alternativeName>
        <fullName>IGP synthase glutaminase subunit 2</fullName>
        <ecNumber>3.5.1.2</ecNumber>
    </alternativeName>
    <alternativeName>
        <fullName>IGP synthase subunit HisH 2</fullName>
    </alternativeName>
    <alternativeName>
        <fullName>ImGP synthase subunit HisH 2</fullName>
        <shortName>IGPS subunit HisH 2</shortName>
    </alternativeName>
</protein>
<evidence type="ECO:0000250" key="1"/>
<feature type="chain" id="PRO_0000152462" description="Imidazole glycerol phosphate synthase subunit HisH 2">
    <location>
        <begin position="1"/>
        <end position="202"/>
    </location>
</feature>
<feature type="domain" description="Glutamine amidotransferase type-1">
    <location>
        <begin position="1"/>
        <end position="202"/>
    </location>
</feature>
<feature type="active site" description="Nucleophile" evidence="1">
    <location>
        <position position="80"/>
    </location>
</feature>
<feature type="active site" evidence="1">
    <location>
        <position position="183"/>
    </location>
</feature>
<feature type="active site" evidence="1">
    <location>
        <position position="185"/>
    </location>
</feature>
<proteinExistence type="inferred from homology"/>
<reference key="1">
    <citation type="journal article" date="2004" name="J. Bacteriol.">
        <title>Complete genome sequence of the genetically tractable hydrogenotrophic methanogen Methanococcus maripaludis.</title>
        <authorList>
            <person name="Hendrickson E.L."/>
            <person name="Kaul R."/>
            <person name="Zhou Y."/>
            <person name="Bovee D."/>
            <person name="Chapman P."/>
            <person name="Chung J."/>
            <person name="Conway de Macario E."/>
            <person name="Dodsworth J.A."/>
            <person name="Gillett W."/>
            <person name="Graham D.E."/>
            <person name="Hackett M."/>
            <person name="Haydock A.K."/>
            <person name="Kang A."/>
            <person name="Land M.L."/>
            <person name="Levy R."/>
            <person name="Lie T.J."/>
            <person name="Major T.A."/>
            <person name="Moore B.C."/>
            <person name="Porat I."/>
            <person name="Palmeiri A."/>
            <person name="Rouse G."/>
            <person name="Saenphimmachak C."/>
            <person name="Soell D."/>
            <person name="Van Dien S."/>
            <person name="Wang T."/>
            <person name="Whitman W.B."/>
            <person name="Xia Q."/>
            <person name="Zhang Y."/>
            <person name="Larimer F.W."/>
            <person name="Olson M.V."/>
            <person name="Leigh J.A."/>
        </authorList>
    </citation>
    <scope>NUCLEOTIDE SEQUENCE [LARGE SCALE GENOMIC DNA]</scope>
    <source>
        <strain>DSM 14266 / JCM 13030 / NBRC 101832 / S2 / LL</strain>
    </source>
</reference>
<organism>
    <name type="scientific">Methanococcus maripaludis (strain DSM 14266 / JCM 13030 / NBRC 101832 / S2 / LL)</name>
    <dbReference type="NCBI Taxonomy" id="267377"/>
    <lineage>
        <taxon>Archaea</taxon>
        <taxon>Methanobacteriati</taxon>
        <taxon>Methanobacteriota</taxon>
        <taxon>Methanomada group</taxon>
        <taxon>Methanococci</taxon>
        <taxon>Methanococcales</taxon>
        <taxon>Methanococcaceae</taxon>
        <taxon>Methanococcus</taxon>
    </lineage>
</organism>
<comment type="function">
    <text evidence="1">IGPS catalyzes the conversion of PRFAR and glutamine to IGP, AICAR and glutamate. The HisH subunit provides the glutamine amidotransferase activity that produces the ammonia necessary to HisF for the synthesis of IGP and AICAR (By similarity).</text>
</comment>
<comment type="catalytic activity">
    <reaction>
        <text>5-[(5-phospho-1-deoxy-D-ribulos-1-ylimino)methylamino]-1-(5-phospho-beta-D-ribosyl)imidazole-4-carboxamide + L-glutamine = D-erythro-1-(imidazol-4-yl)glycerol 3-phosphate + 5-amino-1-(5-phospho-beta-D-ribosyl)imidazole-4-carboxamide + L-glutamate + H(+)</text>
        <dbReference type="Rhea" id="RHEA:24793"/>
        <dbReference type="ChEBI" id="CHEBI:15378"/>
        <dbReference type="ChEBI" id="CHEBI:29985"/>
        <dbReference type="ChEBI" id="CHEBI:58278"/>
        <dbReference type="ChEBI" id="CHEBI:58359"/>
        <dbReference type="ChEBI" id="CHEBI:58475"/>
        <dbReference type="ChEBI" id="CHEBI:58525"/>
        <dbReference type="EC" id="4.3.2.10"/>
    </reaction>
</comment>
<comment type="catalytic activity">
    <reaction>
        <text>L-glutamine + H2O = L-glutamate + NH4(+)</text>
        <dbReference type="Rhea" id="RHEA:15889"/>
        <dbReference type="ChEBI" id="CHEBI:15377"/>
        <dbReference type="ChEBI" id="CHEBI:28938"/>
        <dbReference type="ChEBI" id="CHEBI:29985"/>
        <dbReference type="ChEBI" id="CHEBI:58359"/>
        <dbReference type="EC" id="3.5.1.2"/>
    </reaction>
</comment>
<comment type="pathway">
    <text>Amino-acid biosynthesis; L-histidine biosynthesis; L-histidine from 5-phospho-alpha-D-ribose 1-diphosphate: step 5/9.</text>
</comment>
<comment type="subunit">
    <text evidence="1">Heterodimer of HisH and HisF.</text>
</comment>
<comment type="subcellular location">
    <subcellularLocation>
        <location evidence="1">Cytoplasm</location>
    </subcellularLocation>
</comment>
<accession>P61783</accession>
<dbReference type="EC" id="4.3.2.10"/>
<dbReference type="EC" id="3.5.1.2"/>
<dbReference type="EMBL" id="BX950229">
    <property type="protein sequence ID" value="CAF30638.1"/>
    <property type="molecule type" value="Genomic_DNA"/>
</dbReference>
<dbReference type="RefSeq" id="WP_011171026.1">
    <property type="nucleotide sequence ID" value="NC_005791.1"/>
</dbReference>
<dbReference type="SMR" id="P61783"/>
<dbReference type="STRING" id="267377.MMP1082"/>
<dbReference type="EnsemblBacteria" id="CAF30638">
    <property type="protein sequence ID" value="CAF30638"/>
    <property type="gene ID" value="MMP1082"/>
</dbReference>
<dbReference type="GeneID" id="2761201"/>
<dbReference type="KEGG" id="mmp:MMP1082"/>
<dbReference type="PATRIC" id="fig|267377.15.peg.1115"/>
<dbReference type="eggNOG" id="arCOG00089">
    <property type="taxonomic scope" value="Archaea"/>
</dbReference>
<dbReference type="HOGENOM" id="CLU_071837_2_0_2"/>
<dbReference type="OrthoDB" id="33401at2157"/>
<dbReference type="UniPathway" id="UPA00031">
    <property type="reaction ID" value="UER00010"/>
</dbReference>
<dbReference type="Proteomes" id="UP000000590">
    <property type="component" value="Chromosome"/>
</dbReference>
<dbReference type="GO" id="GO:0005737">
    <property type="term" value="C:cytoplasm"/>
    <property type="evidence" value="ECO:0007669"/>
    <property type="project" value="UniProtKB-SubCell"/>
</dbReference>
<dbReference type="GO" id="GO:0004359">
    <property type="term" value="F:glutaminase activity"/>
    <property type="evidence" value="ECO:0007669"/>
    <property type="project" value="UniProtKB-EC"/>
</dbReference>
<dbReference type="GO" id="GO:0000107">
    <property type="term" value="F:imidazoleglycerol-phosphate synthase activity"/>
    <property type="evidence" value="ECO:0007669"/>
    <property type="project" value="UniProtKB-UniRule"/>
</dbReference>
<dbReference type="GO" id="GO:0016829">
    <property type="term" value="F:lyase activity"/>
    <property type="evidence" value="ECO:0007669"/>
    <property type="project" value="UniProtKB-KW"/>
</dbReference>
<dbReference type="GO" id="GO:0000105">
    <property type="term" value="P:L-histidine biosynthetic process"/>
    <property type="evidence" value="ECO:0007669"/>
    <property type="project" value="UniProtKB-UniRule"/>
</dbReference>
<dbReference type="CDD" id="cd01748">
    <property type="entry name" value="GATase1_IGP_Synthase"/>
    <property type="match status" value="1"/>
</dbReference>
<dbReference type="Gene3D" id="3.40.50.880">
    <property type="match status" value="1"/>
</dbReference>
<dbReference type="HAMAP" id="MF_00278">
    <property type="entry name" value="HisH"/>
    <property type="match status" value="1"/>
</dbReference>
<dbReference type="InterPro" id="IPR029062">
    <property type="entry name" value="Class_I_gatase-like"/>
</dbReference>
<dbReference type="InterPro" id="IPR017926">
    <property type="entry name" value="GATASE"/>
</dbReference>
<dbReference type="InterPro" id="IPR010139">
    <property type="entry name" value="Imidazole-glycPsynth_HisH"/>
</dbReference>
<dbReference type="NCBIfam" id="TIGR01855">
    <property type="entry name" value="IMP_synth_hisH"/>
    <property type="match status" value="1"/>
</dbReference>
<dbReference type="PANTHER" id="PTHR42701">
    <property type="entry name" value="IMIDAZOLE GLYCEROL PHOSPHATE SYNTHASE SUBUNIT HISH"/>
    <property type="match status" value="1"/>
</dbReference>
<dbReference type="PANTHER" id="PTHR42701:SF1">
    <property type="entry name" value="IMIDAZOLE GLYCEROL PHOSPHATE SYNTHASE SUBUNIT HISH"/>
    <property type="match status" value="1"/>
</dbReference>
<dbReference type="Pfam" id="PF00117">
    <property type="entry name" value="GATase"/>
    <property type="match status" value="1"/>
</dbReference>
<dbReference type="PIRSF" id="PIRSF000495">
    <property type="entry name" value="Amidotransf_hisH"/>
    <property type="match status" value="1"/>
</dbReference>
<dbReference type="SUPFAM" id="SSF52317">
    <property type="entry name" value="Class I glutamine amidotransferase-like"/>
    <property type="match status" value="1"/>
</dbReference>
<dbReference type="PROSITE" id="PS51273">
    <property type="entry name" value="GATASE_TYPE_1"/>
    <property type="match status" value="1"/>
</dbReference>
<name>HIS52_METMP</name>
<sequence length="202" mass="22797">MIAIIDYGMGNVGSIKNMIAKIGFDAIITNDPELISKATKLILPGVGSFDSGMTNLKELGLIDILNKKVVQEKTPLLGICLGMHLLTNSSEEGRLKGLGFINAKTVKFKLSNKFKIPHMGWNYVKFSIKNKLSDNLIENSRFYFVHSYYVICEDKKNILMTTEYENEFTSAVSKDNIYGVQFHPEKSHKFGMKLMENFIKQA</sequence>
<keyword id="KW-0028">Amino-acid biosynthesis</keyword>
<keyword id="KW-0963">Cytoplasm</keyword>
<keyword id="KW-0315">Glutamine amidotransferase</keyword>
<keyword id="KW-0368">Histidine biosynthesis</keyword>
<keyword id="KW-0378">Hydrolase</keyword>
<keyword id="KW-0456">Lyase</keyword>
<keyword id="KW-1185">Reference proteome</keyword>